<comment type="function">
    <text evidence="1">Catalyzes the reversible transfer of the terminal phosphate group between ATP and AMP. Plays an important role in cellular energy homeostasis and in adenine nucleotide metabolism.</text>
</comment>
<comment type="catalytic activity">
    <reaction evidence="1">
        <text>AMP + ATP = 2 ADP</text>
        <dbReference type="Rhea" id="RHEA:12973"/>
        <dbReference type="ChEBI" id="CHEBI:30616"/>
        <dbReference type="ChEBI" id="CHEBI:456215"/>
        <dbReference type="ChEBI" id="CHEBI:456216"/>
        <dbReference type="EC" id="2.7.4.3"/>
    </reaction>
</comment>
<comment type="subcellular location">
    <subcellularLocation>
        <location evidence="1">Cytoplasm</location>
    </subcellularLocation>
</comment>
<comment type="similarity">
    <text evidence="2">Belongs to the adenylate kinase family.</text>
</comment>
<keyword id="KW-0067">ATP-binding</keyword>
<keyword id="KW-0963">Cytoplasm</keyword>
<keyword id="KW-0418">Kinase</keyword>
<keyword id="KW-0547">Nucleotide-binding</keyword>
<keyword id="KW-1185">Reference proteome</keyword>
<keyword id="KW-0808">Transferase</keyword>
<dbReference type="EC" id="2.7.4.3"/>
<dbReference type="EMBL" id="D10335">
    <property type="protein sequence ID" value="BAA01181.1"/>
    <property type="molecule type" value="mRNA"/>
</dbReference>
<dbReference type="EMBL" id="AC137922">
    <property type="protein sequence ID" value="AAX96124.1"/>
    <property type="molecule type" value="Genomic_DNA"/>
</dbReference>
<dbReference type="EMBL" id="DP000010">
    <property type="protein sequence ID" value="ABA92960.1"/>
    <property type="molecule type" value="Genomic_DNA"/>
</dbReference>
<dbReference type="EMBL" id="AP008217">
    <property type="protein sequence ID" value="BAF28122.1"/>
    <property type="molecule type" value="Genomic_DNA"/>
</dbReference>
<dbReference type="EMBL" id="AP014967">
    <property type="protein sequence ID" value="BAT13742.1"/>
    <property type="molecule type" value="Genomic_DNA"/>
</dbReference>
<dbReference type="EMBL" id="AP014967">
    <property type="protein sequence ID" value="BAT13739.1"/>
    <property type="molecule type" value="Genomic_DNA"/>
</dbReference>
<dbReference type="EMBL" id="CM000148">
    <property type="protein sequence ID" value="EAZ18200.1"/>
    <property type="molecule type" value="Genomic_DNA"/>
</dbReference>
<dbReference type="EMBL" id="AK073605">
    <property type="protein sequence ID" value="BAG93546.1"/>
    <property type="molecule type" value="mRNA"/>
</dbReference>
<dbReference type="RefSeq" id="XP_015615329.1">
    <property type="nucleotide sequence ID" value="XM_015759843.1"/>
</dbReference>
<dbReference type="RefSeq" id="XP_015615393.1">
    <property type="nucleotide sequence ID" value="XM_015759907.1"/>
</dbReference>
<dbReference type="SMR" id="Q08480"/>
<dbReference type="FunCoup" id="Q08480">
    <property type="interactions" value="2507"/>
</dbReference>
<dbReference type="STRING" id="39947.Q08480"/>
<dbReference type="PaxDb" id="39947-Q08480"/>
<dbReference type="EnsemblPlants" id="Os11t0312220-00">
    <property type="protein sequence ID" value="Os11t0312220-00"/>
    <property type="gene ID" value="Os11g0312220"/>
</dbReference>
<dbReference type="EnsemblPlants" id="Os11t0312400-01">
    <property type="protein sequence ID" value="Os11t0312400-01"/>
    <property type="gene ID" value="Os11g0312400"/>
</dbReference>
<dbReference type="Gramene" id="Os11t0312220-00">
    <property type="protein sequence ID" value="Os11t0312220-00"/>
    <property type="gene ID" value="Os11g0312220"/>
</dbReference>
<dbReference type="Gramene" id="Os11t0312400-01">
    <property type="protein sequence ID" value="Os11t0312400-01"/>
    <property type="gene ID" value="Os11g0312400"/>
</dbReference>
<dbReference type="KEGG" id="dosa:Os11g0312400"/>
<dbReference type="eggNOG" id="KOG3078">
    <property type="taxonomic scope" value="Eukaryota"/>
</dbReference>
<dbReference type="HOGENOM" id="CLU_032354_1_0_1"/>
<dbReference type="InParanoid" id="Q08480"/>
<dbReference type="OMA" id="VYHEQTA"/>
<dbReference type="OrthoDB" id="439792at2759"/>
<dbReference type="Proteomes" id="UP000000763">
    <property type="component" value="Chromosome 11"/>
</dbReference>
<dbReference type="Proteomes" id="UP000007752">
    <property type="component" value="Chromosome 11"/>
</dbReference>
<dbReference type="Proteomes" id="UP000059680">
    <property type="component" value="Chromosome 11"/>
</dbReference>
<dbReference type="GO" id="GO:0005737">
    <property type="term" value="C:cytoplasm"/>
    <property type="evidence" value="ECO:0000318"/>
    <property type="project" value="GO_Central"/>
</dbReference>
<dbReference type="GO" id="GO:0005739">
    <property type="term" value="C:mitochondrion"/>
    <property type="evidence" value="ECO:0000318"/>
    <property type="project" value="GO_Central"/>
</dbReference>
<dbReference type="GO" id="GO:0004017">
    <property type="term" value="F:adenylate kinase activity"/>
    <property type="evidence" value="ECO:0000250"/>
    <property type="project" value="Gramene"/>
</dbReference>
<dbReference type="GO" id="GO:0005524">
    <property type="term" value="F:ATP binding"/>
    <property type="evidence" value="ECO:0007669"/>
    <property type="project" value="UniProtKB-KW"/>
</dbReference>
<dbReference type="GO" id="GO:0006163">
    <property type="term" value="P:purine nucleotide metabolic process"/>
    <property type="evidence" value="ECO:0000270"/>
    <property type="project" value="Gramene"/>
</dbReference>
<dbReference type="CDD" id="cd01428">
    <property type="entry name" value="ADK"/>
    <property type="match status" value="1"/>
</dbReference>
<dbReference type="FunFam" id="3.40.50.300:FF:000106">
    <property type="entry name" value="Adenylate kinase mitochondrial"/>
    <property type="match status" value="1"/>
</dbReference>
<dbReference type="Gene3D" id="3.40.50.300">
    <property type="entry name" value="P-loop containing nucleotide triphosphate hydrolases"/>
    <property type="match status" value="1"/>
</dbReference>
<dbReference type="HAMAP" id="MF_00235">
    <property type="entry name" value="Adenylate_kinase_Adk"/>
    <property type="match status" value="1"/>
</dbReference>
<dbReference type="InterPro" id="IPR006259">
    <property type="entry name" value="Adenyl_kin_sub"/>
</dbReference>
<dbReference type="InterPro" id="IPR000850">
    <property type="entry name" value="Adenylat/UMP-CMP_kin"/>
</dbReference>
<dbReference type="InterPro" id="IPR033690">
    <property type="entry name" value="Adenylat_kinase_CS"/>
</dbReference>
<dbReference type="InterPro" id="IPR007862">
    <property type="entry name" value="Adenylate_kinase_lid-dom"/>
</dbReference>
<dbReference type="InterPro" id="IPR027417">
    <property type="entry name" value="P-loop_NTPase"/>
</dbReference>
<dbReference type="NCBIfam" id="TIGR01351">
    <property type="entry name" value="adk"/>
    <property type="match status" value="1"/>
</dbReference>
<dbReference type="NCBIfam" id="NF001380">
    <property type="entry name" value="PRK00279.1-2"/>
    <property type="match status" value="1"/>
</dbReference>
<dbReference type="NCBIfam" id="NF001381">
    <property type="entry name" value="PRK00279.1-3"/>
    <property type="match status" value="1"/>
</dbReference>
<dbReference type="PANTHER" id="PTHR23359">
    <property type="entry name" value="NUCLEOTIDE KINASE"/>
    <property type="match status" value="1"/>
</dbReference>
<dbReference type="Pfam" id="PF00406">
    <property type="entry name" value="ADK"/>
    <property type="match status" value="1"/>
</dbReference>
<dbReference type="Pfam" id="PF05191">
    <property type="entry name" value="ADK_lid"/>
    <property type="match status" value="1"/>
</dbReference>
<dbReference type="PRINTS" id="PR00094">
    <property type="entry name" value="ADENYLTKNASE"/>
</dbReference>
<dbReference type="SUPFAM" id="SSF52540">
    <property type="entry name" value="P-loop containing nucleoside triphosphate hydrolases"/>
    <property type="match status" value="1"/>
</dbReference>
<dbReference type="PROSITE" id="PS00113">
    <property type="entry name" value="ADENYLATE_KINASE"/>
    <property type="match status" value="1"/>
</dbReference>
<protein>
    <recommendedName>
        <fullName>Adenylate kinase 4</fullName>
        <ecNumber>2.7.4.3</ecNumber>
    </recommendedName>
    <alternativeName>
        <fullName>ATP-AMP transphosphorylase 4</fullName>
    </alternativeName>
    <alternativeName>
        <fullName>ATP:AMP phosphotransferase</fullName>
    </alternativeName>
    <alternativeName>
        <fullName>Adenylate kinase B</fullName>
        <shortName>AK B</shortName>
    </alternativeName>
    <alternativeName>
        <fullName>Adenylate monophosphate kinase 4</fullName>
    </alternativeName>
</protein>
<proteinExistence type="evidence at transcript level"/>
<accession>Q08480</accession>
<accession>A0A0P0Y1T6</accession>
<accession>Q0IT43</accession>
<accession>Q53MA3</accession>
<sequence length="243" mass="26675">MAAAANLEDVPSMDLMNELLRRMKCSSKPDKRLILVGPPGSGKGTQSPIIKDEYCLCHLATGDMLRAAVAAKTPLGVKAKEAMDKGELVSDDLVVGIIDEAMKKPSCQKGFILDGFPRTVVQAQKLDEMLEKKGTKVDKVLNFAIDDSILEERITGRWIHPSSGRSYHTKFAPPKVPGVDDVTGEPLIQRKDDTAEVLKSRLEAFHKQTEPVIDYYSKKALVANLHAEKPPKEVTAEVQKVLS</sequence>
<reference key="1">
    <citation type="journal article" date="1992" name="Plant J.">
        <title>Molecular characterization of cDNA encoding for adenylate kinase of rice (Oryza sativa L.).</title>
        <authorList>
            <person name="Kawai M."/>
            <person name="Kidou S."/>
            <person name="Kato A."/>
            <person name="Uchimiya H."/>
        </authorList>
    </citation>
    <scope>NUCLEOTIDE SEQUENCE [MRNA] (OS11G0312400)</scope>
    <source>
        <strain>cv. Yamahoushi</strain>
    </source>
</reference>
<reference key="2">
    <citation type="journal article" date="2005" name="BMC Biol.">
        <title>The sequence of rice chromosomes 11 and 12, rich in disease resistance genes and recent gene duplications.</title>
        <authorList>
            <consortium name="The rice chromosomes 11 and 12 sequencing consortia"/>
        </authorList>
    </citation>
    <scope>NUCLEOTIDE SEQUENCE [LARGE SCALE GENOMIC DNA]</scope>
    <source>
        <strain>cv. Nipponbare</strain>
    </source>
</reference>
<reference key="3">
    <citation type="journal article" date="2005" name="Nature">
        <title>The map-based sequence of the rice genome.</title>
        <authorList>
            <consortium name="International rice genome sequencing project (IRGSP)"/>
        </authorList>
    </citation>
    <scope>NUCLEOTIDE SEQUENCE [LARGE SCALE GENOMIC DNA]</scope>
    <source>
        <strain>cv. Nipponbare</strain>
    </source>
</reference>
<reference key="4">
    <citation type="journal article" date="2008" name="Nucleic Acids Res.">
        <title>The rice annotation project database (RAP-DB): 2008 update.</title>
        <authorList>
            <consortium name="The rice annotation project (RAP)"/>
        </authorList>
    </citation>
    <scope>GENOME REANNOTATION</scope>
    <source>
        <strain>cv. Nipponbare</strain>
    </source>
</reference>
<reference key="5">
    <citation type="journal article" date="2013" name="Rice">
        <title>Improvement of the Oryza sativa Nipponbare reference genome using next generation sequence and optical map data.</title>
        <authorList>
            <person name="Kawahara Y."/>
            <person name="de la Bastide M."/>
            <person name="Hamilton J.P."/>
            <person name="Kanamori H."/>
            <person name="McCombie W.R."/>
            <person name="Ouyang S."/>
            <person name="Schwartz D.C."/>
            <person name="Tanaka T."/>
            <person name="Wu J."/>
            <person name="Zhou S."/>
            <person name="Childs K.L."/>
            <person name="Davidson R.M."/>
            <person name="Lin H."/>
            <person name="Quesada-Ocampo L."/>
            <person name="Vaillancourt B."/>
            <person name="Sakai H."/>
            <person name="Lee S.S."/>
            <person name="Kim J."/>
            <person name="Numa H."/>
            <person name="Itoh T."/>
            <person name="Buell C.R."/>
            <person name="Matsumoto T."/>
        </authorList>
    </citation>
    <scope>GENOME REANNOTATION</scope>
    <source>
        <strain>cv. Nipponbare</strain>
    </source>
</reference>
<reference key="6">
    <citation type="journal article" date="2005" name="PLoS Biol.">
        <title>The genomes of Oryza sativa: a history of duplications.</title>
        <authorList>
            <person name="Yu J."/>
            <person name="Wang J."/>
            <person name="Lin W."/>
            <person name="Li S."/>
            <person name="Li H."/>
            <person name="Zhou J."/>
            <person name="Ni P."/>
            <person name="Dong W."/>
            <person name="Hu S."/>
            <person name="Zeng C."/>
            <person name="Zhang J."/>
            <person name="Zhang Y."/>
            <person name="Li R."/>
            <person name="Xu Z."/>
            <person name="Li S."/>
            <person name="Li X."/>
            <person name="Zheng H."/>
            <person name="Cong L."/>
            <person name="Lin L."/>
            <person name="Yin J."/>
            <person name="Geng J."/>
            <person name="Li G."/>
            <person name="Shi J."/>
            <person name="Liu J."/>
            <person name="Lv H."/>
            <person name="Li J."/>
            <person name="Wang J."/>
            <person name="Deng Y."/>
            <person name="Ran L."/>
            <person name="Shi X."/>
            <person name="Wang X."/>
            <person name="Wu Q."/>
            <person name="Li C."/>
            <person name="Ren X."/>
            <person name="Wang J."/>
            <person name="Wang X."/>
            <person name="Li D."/>
            <person name="Liu D."/>
            <person name="Zhang X."/>
            <person name="Ji Z."/>
            <person name="Zhao W."/>
            <person name="Sun Y."/>
            <person name="Zhang Z."/>
            <person name="Bao J."/>
            <person name="Han Y."/>
            <person name="Dong L."/>
            <person name="Ji J."/>
            <person name="Chen P."/>
            <person name="Wu S."/>
            <person name="Liu J."/>
            <person name="Xiao Y."/>
            <person name="Bu D."/>
            <person name="Tan J."/>
            <person name="Yang L."/>
            <person name="Ye C."/>
            <person name="Zhang J."/>
            <person name="Xu J."/>
            <person name="Zhou Y."/>
            <person name="Yu Y."/>
            <person name="Zhang B."/>
            <person name="Zhuang S."/>
            <person name="Wei H."/>
            <person name="Liu B."/>
            <person name="Lei M."/>
            <person name="Yu H."/>
            <person name="Li Y."/>
            <person name="Xu H."/>
            <person name="Wei S."/>
            <person name="He X."/>
            <person name="Fang L."/>
            <person name="Zhang Z."/>
            <person name="Zhang Y."/>
            <person name="Huang X."/>
            <person name="Su Z."/>
            <person name="Tong W."/>
            <person name="Li J."/>
            <person name="Tong Z."/>
            <person name="Li S."/>
            <person name="Ye J."/>
            <person name="Wang L."/>
            <person name="Fang L."/>
            <person name="Lei T."/>
            <person name="Chen C.-S."/>
            <person name="Chen H.-C."/>
            <person name="Xu Z."/>
            <person name="Li H."/>
            <person name="Huang H."/>
            <person name="Zhang F."/>
            <person name="Xu H."/>
            <person name="Li N."/>
            <person name="Zhao C."/>
            <person name="Li S."/>
            <person name="Dong L."/>
            <person name="Huang Y."/>
            <person name="Li L."/>
            <person name="Xi Y."/>
            <person name="Qi Q."/>
            <person name="Li W."/>
            <person name="Zhang B."/>
            <person name="Hu W."/>
            <person name="Zhang Y."/>
            <person name="Tian X."/>
            <person name="Jiao Y."/>
            <person name="Liang X."/>
            <person name="Jin J."/>
            <person name="Gao L."/>
            <person name="Zheng W."/>
            <person name="Hao B."/>
            <person name="Liu S.-M."/>
            <person name="Wang W."/>
            <person name="Yuan L."/>
            <person name="Cao M."/>
            <person name="McDermott J."/>
            <person name="Samudrala R."/>
            <person name="Wang J."/>
            <person name="Wong G.K.-S."/>
            <person name="Yang H."/>
        </authorList>
    </citation>
    <scope>NUCLEOTIDE SEQUENCE [LARGE SCALE GENOMIC DNA]</scope>
    <source>
        <strain>cv. Nipponbare</strain>
    </source>
</reference>
<reference key="7">
    <citation type="journal article" date="2003" name="Science">
        <title>Collection, mapping, and annotation of over 28,000 cDNA clones from japonica rice.</title>
        <authorList>
            <consortium name="The rice full-length cDNA consortium"/>
        </authorList>
    </citation>
    <scope>NUCLEOTIDE SEQUENCE [LARGE SCALE MRNA] (OS11G0312400)</scope>
    <source>
        <strain>cv. Nipponbare</strain>
    </source>
</reference>
<organism>
    <name type="scientific">Oryza sativa subsp. japonica</name>
    <name type="common">Rice</name>
    <dbReference type="NCBI Taxonomy" id="39947"/>
    <lineage>
        <taxon>Eukaryota</taxon>
        <taxon>Viridiplantae</taxon>
        <taxon>Streptophyta</taxon>
        <taxon>Embryophyta</taxon>
        <taxon>Tracheophyta</taxon>
        <taxon>Spermatophyta</taxon>
        <taxon>Magnoliopsida</taxon>
        <taxon>Liliopsida</taxon>
        <taxon>Poales</taxon>
        <taxon>Poaceae</taxon>
        <taxon>BOP clade</taxon>
        <taxon>Oryzoideae</taxon>
        <taxon>Oryzeae</taxon>
        <taxon>Oryzinae</taxon>
        <taxon>Oryza</taxon>
        <taxon>Oryza sativa</taxon>
    </lineage>
</organism>
<gene>
    <name type="primary">ADK-B</name>
    <name evidence="4" type="ordered locus">Os11g0312400</name>
    <name evidence="2" type="ordered locus">LOC_Os11g20790</name>
</gene>
<gene>
    <name evidence="3" type="ordered locus">Os11g0312220</name>
</gene>
<name>KAD4_ORYSJ</name>
<evidence type="ECO:0000250" key="1">
    <source>
        <dbReference type="UniProtKB" id="P69441"/>
    </source>
</evidence>
<evidence type="ECO:0000305" key="2"/>
<evidence type="ECO:0000312" key="3">
    <source>
        <dbReference type="EMBL" id="BAT13739.1"/>
    </source>
</evidence>
<evidence type="ECO:0000312" key="4">
    <source>
        <dbReference type="EMBL" id="BAT13742.1"/>
    </source>
</evidence>
<feature type="chain" id="PRO_0000158943" description="Adenylate kinase 4">
    <location>
        <begin position="1"/>
        <end position="243"/>
    </location>
</feature>
<feature type="region of interest" description="NMP" evidence="1">
    <location>
        <begin position="60"/>
        <end position="89"/>
    </location>
</feature>
<feature type="region of interest" description="LID" evidence="1">
    <location>
        <begin position="156"/>
        <end position="193"/>
    </location>
</feature>
<feature type="binding site" evidence="1">
    <location>
        <begin position="40"/>
        <end position="45"/>
    </location>
    <ligand>
        <name>ATP</name>
        <dbReference type="ChEBI" id="CHEBI:30616"/>
    </ligand>
</feature>
<feature type="binding site" evidence="1">
    <location>
        <position position="61"/>
    </location>
    <ligand>
        <name>AMP</name>
        <dbReference type="ChEBI" id="CHEBI:456215"/>
    </ligand>
</feature>
<feature type="binding site" evidence="1">
    <location>
        <position position="66"/>
    </location>
    <ligand>
        <name>AMP</name>
        <dbReference type="ChEBI" id="CHEBI:456215"/>
    </ligand>
</feature>
<feature type="binding site" evidence="1">
    <location>
        <begin position="87"/>
        <end position="89"/>
    </location>
    <ligand>
        <name>AMP</name>
        <dbReference type="ChEBI" id="CHEBI:456215"/>
    </ligand>
</feature>
<feature type="binding site" evidence="1">
    <location>
        <begin position="115"/>
        <end position="118"/>
    </location>
    <ligand>
        <name>AMP</name>
        <dbReference type="ChEBI" id="CHEBI:456215"/>
    </ligand>
</feature>
<feature type="binding site" evidence="1">
    <location>
        <position position="122"/>
    </location>
    <ligand>
        <name>AMP</name>
        <dbReference type="ChEBI" id="CHEBI:456215"/>
    </ligand>
</feature>
<feature type="binding site" evidence="1">
    <location>
        <position position="157"/>
    </location>
    <ligand>
        <name>ATP</name>
        <dbReference type="ChEBI" id="CHEBI:30616"/>
    </ligand>
</feature>
<feature type="binding site" evidence="1">
    <location>
        <position position="190"/>
    </location>
    <ligand>
        <name>AMP</name>
        <dbReference type="ChEBI" id="CHEBI:456215"/>
    </ligand>
</feature>
<feature type="binding site" evidence="1">
    <location>
        <position position="201"/>
    </location>
    <ligand>
        <name>AMP</name>
        <dbReference type="ChEBI" id="CHEBI:456215"/>
    </ligand>
</feature>